<name>KDGD_XANC8</name>
<comment type="catalytic activity">
    <reaction evidence="1">
        <text>5-dehydro-4-deoxy-D-glucarate + H(+) = 2,5-dioxopentanoate + CO2 + H2O</text>
        <dbReference type="Rhea" id="RHEA:24608"/>
        <dbReference type="ChEBI" id="CHEBI:15377"/>
        <dbReference type="ChEBI" id="CHEBI:15378"/>
        <dbReference type="ChEBI" id="CHEBI:16526"/>
        <dbReference type="ChEBI" id="CHEBI:42819"/>
        <dbReference type="ChEBI" id="CHEBI:58136"/>
        <dbReference type="EC" id="4.2.1.41"/>
    </reaction>
</comment>
<comment type="pathway">
    <text evidence="1">Carbohydrate acid metabolism; D-glucarate degradation; 2,5-dioxopentanoate from D-glucarate: step 2/2.</text>
</comment>
<comment type="similarity">
    <text evidence="1">Belongs to the DapA family.</text>
</comment>
<keyword id="KW-0456">Lyase</keyword>
<proteinExistence type="inferred from homology"/>
<dbReference type="EC" id="4.2.1.41" evidence="1"/>
<dbReference type="EMBL" id="CP000050">
    <property type="protein sequence ID" value="AAY48028.1"/>
    <property type="molecule type" value="Genomic_DNA"/>
</dbReference>
<dbReference type="RefSeq" id="WP_011269541.1">
    <property type="nucleotide sequence ID" value="NC_007086.1"/>
</dbReference>
<dbReference type="SMR" id="Q4UY45"/>
<dbReference type="KEGG" id="xcb:XC_0954"/>
<dbReference type="HOGENOM" id="CLU_049343_5_2_6"/>
<dbReference type="UniPathway" id="UPA00564">
    <property type="reaction ID" value="UER00628"/>
</dbReference>
<dbReference type="Proteomes" id="UP000000420">
    <property type="component" value="Chromosome"/>
</dbReference>
<dbReference type="GO" id="GO:0008840">
    <property type="term" value="F:4-hydroxy-tetrahydrodipicolinate synthase activity"/>
    <property type="evidence" value="ECO:0007669"/>
    <property type="project" value="TreeGrafter"/>
</dbReference>
<dbReference type="GO" id="GO:0047448">
    <property type="term" value="F:5-dehydro-4-deoxyglucarate dehydratase activity"/>
    <property type="evidence" value="ECO:0007669"/>
    <property type="project" value="UniProtKB-UniRule"/>
</dbReference>
<dbReference type="GO" id="GO:0042838">
    <property type="term" value="P:D-glucarate catabolic process"/>
    <property type="evidence" value="ECO:0007669"/>
    <property type="project" value="UniProtKB-UniRule"/>
</dbReference>
<dbReference type="CDD" id="cd00951">
    <property type="entry name" value="KDGDH"/>
    <property type="match status" value="1"/>
</dbReference>
<dbReference type="Gene3D" id="3.20.20.70">
    <property type="entry name" value="Aldolase class I"/>
    <property type="match status" value="1"/>
</dbReference>
<dbReference type="HAMAP" id="MF_00694">
    <property type="entry name" value="KDGDH"/>
    <property type="match status" value="1"/>
</dbReference>
<dbReference type="InterPro" id="IPR013785">
    <property type="entry name" value="Aldolase_TIM"/>
</dbReference>
<dbReference type="InterPro" id="IPR002220">
    <property type="entry name" value="DapA-like"/>
</dbReference>
<dbReference type="InterPro" id="IPR017655">
    <property type="entry name" value="Dehydro-deoxyglucarate_dehyd"/>
</dbReference>
<dbReference type="NCBIfam" id="TIGR03249">
    <property type="entry name" value="KdgD"/>
    <property type="match status" value="1"/>
</dbReference>
<dbReference type="NCBIfam" id="NF002958">
    <property type="entry name" value="PRK03620.1"/>
    <property type="match status" value="1"/>
</dbReference>
<dbReference type="PANTHER" id="PTHR12128:SF19">
    <property type="entry name" value="5-DEHYDRO-4-DEOXYGLUCARATE DEHYDRATASE 2-RELATED"/>
    <property type="match status" value="1"/>
</dbReference>
<dbReference type="PANTHER" id="PTHR12128">
    <property type="entry name" value="DIHYDRODIPICOLINATE SYNTHASE"/>
    <property type="match status" value="1"/>
</dbReference>
<dbReference type="Pfam" id="PF00701">
    <property type="entry name" value="DHDPS"/>
    <property type="match status" value="1"/>
</dbReference>
<dbReference type="PIRSF" id="PIRSF001365">
    <property type="entry name" value="DHDPS"/>
    <property type="match status" value="1"/>
</dbReference>
<dbReference type="SMART" id="SM01130">
    <property type="entry name" value="DHDPS"/>
    <property type="match status" value="1"/>
</dbReference>
<dbReference type="SUPFAM" id="SSF51569">
    <property type="entry name" value="Aldolase"/>
    <property type="match status" value="1"/>
</dbReference>
<gene>
    <name type="ordered locus">XC_0954</name>
</gene>
<sequence length="305" mass="32937">MSSRYTPSEMAQALGAGLLSFPVTHFDADMAFDEPAYRSNLDWLSSHPAAGLFAAGGTGELFSLTLDEVDRAVRAAVTQTAGRMPVIAPAGYGTAIAVAMAQAAERNDADGILLFPPYLTECDADGVAEHVERVCKATSLGVIVYGRANARLDDVALARVAERCPNLMGYKDGIGDVDRMTRIYARLGDRLLYVGGLPTAETFALPYLEMGVTTYSSAIFNFLPEWALSFYAAVRARDHATIYRELNDFVLPYTVLRNRRAGYAVSIVKAGMRAVGRPAGPVRTPLADLTEDEFAQPTQLIGGRR</sequence>
<protein>
    <recommendedName>
        <fullName evidence="1">Probable 5-dehydro-4-deoxyglucarate dehydratase</fullName>
        <ecNumber evidence="1">4.2.1.41</ecNumber>
    </recommendedName>
    <alternativeName>
        <fullName evidence="1">5-keto-4-deoxy-glucarate dehydratase</fullName>
        <shortName evidence="1">KDGDH</shortName>
    </alternativeName>
</protein>
<reference key="1">
    <citation type="journal article" date="2005" name="Genome Res.">
        <title>Comparative and functional genomic analyses of the pathogenicity of phytopathogen Xanthomonas campestris pv. campestris.</title>
        <authorList>
            <person name="Qian W."/>
            <person name="Jia Y."/>
            <person name="Ren S.-X."/>
            <person name="He Y.-Q."/>
            <person name="Feng J.-X."/>
            <person name="Lu L.-F."/>
            <person name="Sun Q."/>
            <person name="Ying G."/>
            <person name="Tang D.-J."/>
            <person name="Tang H."/>
            <person name="Wu W."/>
            <person name="Hao P."/>
            <person name="Wang L."/>
            <person name="Jiang B.-L."/>
            <person name="Zeng S."/>
            <person name="Gu W.-Y."/>
            <person name="Lu G."/>
            <person name="Rong L."/>
            <person name="Tian Y."/>
            <person name="Yao Z."/>
            <person name="Fu G."/>
            <person name="Chen B."/>
            <person name="Fang R."/>
            <person name="Qiang B."/>
            <person name="Chen Z."/>
            <person name="Zhao G.-P."/>
            <person name="Tang J.-L."/>
            <person name="He C."/>
        </authorList>
    </citation>
    <scope>NUCLEOTIDE SEQUENCE [LARGE SCALE GENOMIC DNA]</scope>
    <source>
        <strain>8004</strain>
    </source>
</reference>
<organism>
    <name type="scientific">Xanthomonas campestris pv. campestris (strain 8004)</name>
    <dbReference type="NCBI Taxonomy" id="314565"/>
    <lineage>
        <taxon>Bacteria</taxon>
        <taxon>Pseudomonadati</taxon>
        <taxon>Pseudomonadota</taxon>
        <taxon>Gammaproteobacteria</taxon>
        <taxon>Lysobacterales</taxon>
        <taxon>Lysobacteraceae</taxon>
        <taxon>Xanthomonas</taxon>
    </lineage>
</organism>
<feature type="chain" id="PRO_1000045414" description="Probable 5-dehydro-4-deoxyglucarate dehydratase">
    <location>
        <begin position="1"/>
        <end position="305"/>
    </location>
</feature>
<accession>Q4UY45</accession>
<evidence type="ECO:0000255" key="1">
    <source>
        <dbReference type="HAMAP-Rule" id="MF_00694"/>
    </source>
</evidence>